<accession>A7ZVV7</accession>
<reference key="1">
    <citation type="journal article" date="2008" name="J. Bacteriol.">
        <title>The pangenome structure of Escherichia coli: comparative genomic analysis of E. coli commensal and pathogenic isolates.</title>
        <authorList>
            <person name="Rasko D.A."/>
            <person name="Rosovitz M.J."/>
            <person name="Myers G.S.A."/>
            <person name="Mongodin E.F."/>
            <person name="Fricke W.F."/>
            <person name="Gajer P."/>
            <person name="Crabtree J."/>
            <person name="Sebaihia M."/>
            <person name="Thomson N.R."/>
            <person name="Chaudhuri R."/>
            <person name="Henderson I.R."/>
            <person name="Sperandio V."/>
            <person name="Ravel J."/>
        </authorList>
    </citation>
    <scope>NUCLEOTIDE SEQUENCE [LARGE SCALE GENOMIC DNA]</scope>
    <source>
        <strain>HS</strain>
    </source>
</reference>
<gene>
    <name evidence="1" type="primary">dnaK</name>
    <name type="ordered locus">EcHS_A0015</name>
</gene>
<keyword id="KW-0007">Acetylation</keyword>
<keyword id="KW-0067">ATP-binding</keyword>
<keyword id="KW-0143">Chaperone</keyword>
<keyword id="KW-0547">Nucleotide-binding</keyword>
<keyword id="KW-0597">Phosphoprotein</keyword>
<keyword id="KW-0346">Stress response</keyword>
<comment type="function">
    <text evidence="1">Acts as a chaperone.</text>
</comment>
<comment type="induction">
    <text evidence="1">By stress conditions e.g. heat shock.</text>
</comment>
<comment type="similarity">
    <text evidence="1">Belongs to the heat shock protein 70 family.</text>
</comment>
<dbReference type="EMBL" id="CP000802">
    <property type="protein sequence ID" value="ABV04416.1"/>
    <property type="molecule type" value="Genomic_DNA"/>
</dbReference>
<dbReference type="RefSeq" id="WP_000516140.1">
    <property type="nucleotide sequence ID" value="NC_009800.1"/>
</dbReference>
<dbReference type="BMRB" id="A7ZVV7"/>
<dbReference type="SMR" id="A7ZVV7"/>
<dbReference type="KEGG" id="ecx:EcHS_A0015"/>
<dbReference type="HOGENOM" id="CLU_005965_2_1_6"/>
<dbReference type="GO" id="GO:0005524">
    <property type="term" value="F:ATP binding"/>
    <property type="evidence" value="ECO:0007669"/>
    <property type="project" value="UniProtKB-UniRule"/>
</dbReference>
<dbReference type="GO" id="GO:0140662">
    <property type="term" value="F:ATP-dependent protein folding chaperone"/>
    <property type="evidence" value="ECO:0007669"/>
    <property type="project" value="InterPro"/>
</dbReference>
<dbReference type="GO" id="GO:0051082">
    <property type="term" value="F:unfolded protein binding"/>
    <property type="evidence" value="ECO:0007669"/>
    <property type="project" value="InterPro"/>
</dbReference>
<dbReference type="CDD" id="cd10234">
    <property type="entry name" value="ASKHA_NBD_HSP70_DnaK-like"/>
    <property type="match status" value="1"/>
</dbReference>
<dbReference type="FunFam" id="2.60.34.10:FF:000014">
    <property type="entry name" value="Chaperone protein DnaK HSP70"/>
    <property type="match status" value="1"/>
</dbReference>
<dbReference type="FunFam" id="1.20.1270.10:FF:000001">
    <property type="entry name" value="Molecular chaperone DnaK"/>
    <property type="match status" value="1"/>
</dbReference>
<dbReference type="FunFam" id="3.30.420.40:FF:000004">
    <property type="entry name" value="Molecular chaperone DnaK"/>
    <property type="match status" value="1"/>
</dbReference>
<dbReference type="FunFam" id="3.90.640.10:FF:000003">
    <property type="entry name" value="Molecular chaperone DnaK"/>
    <property type="match status" value="1"/>
</dbReference>
<dbReference type="Gene3D" id="1.20.1270.10">
    <property type="match status" value="1"/>
</dbReference>
<dbReference type="Gene3D" id="3.30.420.40">
    <property type="match status" value="2"/>
</dbReference>
<dbReference type="Gene3D" id="3.90.640.10">
    <property type="entry name" value="Actin, Chain A, domain 4"/>
    <property type="match status" value="1"/>
</dbReference>
<dbReference type="Gene3D" id="2.60.34.10">
    <property type="entry name" value="Substrate Binding Domain Of DNAk, Chain A, domain 1"/>
    <property type="match status" value="1"/>
</dbReference>
<dbReference type="HAMAP" id="MF_00332">
    <property type="entry name" value="DnaK"/>
    <property type="match status" value="1"/>
</dbReference>
<dbReference type="InterPro" id="IPR043129">
    <property type="entry name" value="ATPase_NBD"/>
</dbReference>
<dbReference type="InterPro" id="IPR012725">
    <property type="entry name" value="Chaperone_DnaK"/>
</dbReference>
<dbReference type="InterPro" id="IPR018181">
    <property type="entry name" value="Heat_shock_70_CS"/>
</dbReference>
<dbReference type="InterPro" id="IPR029048">
    <property type="entry name" value="HSP70_C_sf"/>
</dbReference>
<dbReference type="InterPro" id="IPR029047">
    <property type="entry name" value="HSP70_peptide-bd_sf"/>
</dbReference>
<dbReference type="InterPro" id="IPR013126">
    <property type="entry name" value="Hsp_70_fam"/>
</dbReference>
<dbReference type="NCBIfam" id="NF001413">
    <property type="entry name" value="PRK00290.1"/>
    <property type="match status" value="1"/>
</dbReference>
<dbReference type="NCBIfam" id="NF003520">
    <property type="entry name" value="PRK05183.1"/>
    <property type="match status" value="1"/>
</dbReference>
<dbReference type="NCBIfam" id="TIGR02350">
    <property type="entry name" value="prok_dnaK"/>
    <property type="match status" value="1"/>
</dbReference>
<dbReference type="PANTHER" id="PTHR19375">
    <property type="entry name" value="HEAT SHOCK PROTEIN 70KDA"/>
    <property type="match status" value="1"/>
</dbReference>
<dbReference type="Pfam" id="PF00012">
    <property type="entry name" value="HSP70"/>
    <property type="match status" value="1"/>
</dbReference>
<dbReference type="PRINTS" id="PR00301">
    <property type="entry name" value="HEATSHOCK70"/>
</dbReference>
<dbReference type="SUPFAM" id="SSF53067">
    <property type="entry name" value="Actin-like ATPase domain"/>
    <property type="match status" value="2"/>
</dbReference>
<dbReference type="SUPFAM" id="SSF100934">
    <property type="entry name" value="Heat shock protein 70kD (HSP70), C-terminal subdomain"/>
    <property type="match status" value="1"/>
</dbReference>
<dbReference type="SUPFAM" id="SSF100920">
    <property type="entry name" value="Heat shock protein 70kD (HSP70), peptide-binding domain"/>
    <property type="match status" value="1"/>
</dbReference>
<dbReference type="PROSITE" id="PS00297">
    <property type="entry name" value="HSP70_1"/>
    <property type="match status" value="1"/>
</dbReference>
<dbReference type="PROSITE" id="PS00329">
    <property type="entry name" value="HSP70_2"/>
    <property type="match status" value="1"/>
</dbReference>
<dbReference type="PROSITE" id="PS01036">
    <property type="entry name" value="HSP70_3"/>
    <property type="match status" value="1"/>
</dbReference>
<proteinExistence type="inferred from homology"/>
<organism>
    <name type="scientific">Escherichia coli O9:H4 (strain HS)</name>
    <dbReference type="NCBI Taxonomy" id="331112"/>
    <lineage>
        <taxon>Bacteria</taxon>
        <taxon>Pseudomonadati</taxon>
        <taxon>Pseudomonadota</taxon>
        <taxon>Gammaproteobacteria</taxon>
        <taxon>Enterobacterales</taxon>
        <taxon>Enterobacteriaceae</taxon>
        <taxon>Escherichia</taxon>
    </lineage>
</organism>
<protein>
    <recommendedName>
        <fullName evidence="1">Chaperone protein DnaK</fullName>
    </recommendedName>
    <alternativeName>
        <fullName evidence="1">HSP70</fullName>
    </alternativeName>
    <alternativeName>
        <fullName evidence="1">Heat shock 70 kDa protein</fullName>
    </alternativeName>
    <alternativeName>
        <fullName evidence="1">Heat shock protein 70</fullName>
    </alternativeName>
</protein>
<feature type="chain" id="PRO_1000059553" description="Chaperone protein DnaK">
    <location>
        <begin position="1"/>
        <end position="638"/>
    </location>
</feature>
<feature type="region of interest" description="Disordered" evidence="2">
    <location>
        <begin position="602"/>
        <end position="638"/>
    </location>
</feature>
<feature type="compositionally biased region" description="Low complexity" evidence="2">
    <location>
        <begin position="602"/>
        <end position="620"/>
    </location>
</feature>
<feature type="modified residue" description="N6-acetyllysine" evidence="1">
    <location>
        <position position="109"/>
    </location>
</feature>
<feature type="modified residue" description="Phosphothreonine; by autocatalysis" evidence="1">
    <location>
        <position position="199"/>
    </location>
</feature>
<feature type="modified residue" description="N6-acetyllysine" evidence="1">
    <location>
        <position position="245"/>
    </location>
</feature>
<feature type="modified residue" description="N6-acetyllysine" evidence="1">
    <location>
        <position position="304"/>
    </location>
</feature>
<feature type="modified residue" description="N6-acetyllysine" evidence="1">
    <location>
        <position position="421"/>
    </location>
</feature>
<feature type="modified residue" description="N6-acetyllysine" evidence="1">
    <location>
        <position position="556"/>
    </location>
</feature>
<sequence>MGKIIGIDLGTTNSCVAIMDGTTPRVLENAEGDRTTPSIIAYTQDGETLVGQPAKRQAVTNPQNTLFAIKRLIGRRFQDEEVQRDVSIMPFKIIAADNGDAWVEVKGQKMAPPQISAEVLKKMKKTAEDYLGEPVTEAVITVPAYFNDAQRQATKDAGRIAGLEVKRIINEPTAAALAYGLDKGTGNRTIAVYDLGGGTFDISIIEIDEVDGEKTFEVLATNGDTHLGGEDFDSRLINYLVEEFKKDQGIDLRNDPLAMQRLKEAAEKAKIELSSAQQTDVNLPYITADATGPKHMNIKVTRAKLESLVEDLVNRSIEPLKVALQDAGLSVSDIDDVILVGGQTRMPMVQKKVAEFFGKEPRKDVNPDEAVAIGAAVQGGVLTGDVKDVLLLDVTPLSLGIETMGGVMTTLIAKNTTIPTKHSQVFSTAEDNQSAVTIHVLQGERKRAADNKSLGQFNLDGINPAPRGMPQIEVTFDIDADGILHVSAKDKNSGKEQKITIKASSGLNEDEIQKMVRDAEANAEADRKFEELVQTRNQGDHLLHSTRKQVEEAGDKLPADDKTAIESALTALETALKGEDKASIEAKMQELAQVSQKLMEIAQQQHAQQQTAGADASANNAKDDDVVDAEFEEVKDKK</sequence>
<evidence type="ECO:0000255" key="1">
    <source>
        <dbReference type="HAMAP-Rule" id="MF_00332"/>
    </source>
</evidence>
<evidence type="ECO:0000256" key="2">
    <source>
        <dbReference type="SAM" id="MobiDB-lite"/>
    </source>
</evidence>
<name>DNAK_ECOHS</name>